<proteinExistence type="inferred from homology"/>
<feature type="chain" id="PRO_1000203227" description="Phosphoribosylaminoimidazole-succinocarboxamide synthase">
    <location>
        <begin position="1"/>
        <end position="237"/>
    </location>
</feature>
<accession>C5B7A4</accession>
<protein>
    <recommendedName>
        <fullName evidence="1">Phosphoribosylaminoimidazole-succinocarboxamide synthase</fullName>
        <ecNumber evidence="1">6.3.2.6</ecNumber>
    </recommendedName>
    <alternativeName>
        <fullName evidence="1">SAICAR synthetase</fullName>
    </alternativeName>
</protein>
<organism>
    <name type="scientific">Edwardsiella ictaluri (strain 93-146)</name>
    <dbReference type="NCBI Taxonomy" id="634503"/>
    <lineage>
        <taxon>Bacteria</taxon>
        <taxon>Pseudomonadati</taxon>
        <taxon>Pseudomonadota</taxon>
        <taxon>Gammaproteobacteria</taxon>
        <taxon>Enterobacterales</taxon>
        <taxon>Hafniaceae</taxon>
        <taxon>Edwardsiella</taxon>
    </lineage>
</organism>
<keyword id="KW-0067">ATP-binding</keyword>
<keyword id="KW-0436">Ligase</keyword>
<keyword id="KW-0547">Nucleotide-binding</keyword>
<keyword id="KW-0658">Purine biosynthesis</keyword>
<reference key="1">
    <citation type="submission" date="2009-03" db="EMBL/GenBank/DDBJ databases">
        <title>Complete genome sequence of Edwardsiella ictaluri 93-146.</title>
        <authorList>
            <person name="Williams M.L."/>
            <person name="Gillaspy A.F."/>
            <person name="Dyer D.W."/>
            <person name="Thune R.L."/>
            <person name="Waldbieser G.C."/>
            <person name="Schuster S.C."/>
            <person name="Gipson J."/>
            <person name="Zaitshik J."/>
            <person name="Landry C."/>
            <person name="Lawrence M.L."/>
        </authorList>
    </citation>
    <scope>NUCLEOTIDE SEQUENCE [LARGE SCALE GENOMIC DNA]</scope>
    <source>
        <strain>93-146</strain>
    </source>
</reference>
<gene>
    <name evidence="1" type="primary">purC</name>
    <name type="ordered locus">NT01EI_1202</name>
</gene>
<name>PUR7_EDWI9</name>
<dbReference type="EC" id="6.3.2.6" evidence="1"/>
<dbReference type="EMBL" id="CP001600">
    <property type="protein sequence ID" value="ACR68410.1"/>
    <property type="molecule type" value="Genomic_DNA"/>
</dbReference>
<dbReference type="RefSeq" id="WP_015870580.1">
    <property type="nucleotide sequence ID" value="NZ_CP169062.1"/>
</dbReference>
<dbReference type="SMR" id="C5B7A4"/>
<dbReference type="STRING" id="67780.B6E78_16305"/>
<dbReference type="GeneID" id="69538224"/>
<dbReference type="KEGG" id="eic:NT01EI_1202"/>
<dbReference type="PATRIC" id="fig|634503.3.peg.1091"/>
<dbReference type="HOGENOM" id="CLU_061495_2_1_6"/>
<dbReference type="OrthoDB" id="9801549at2"/>
<dbReference type="UniPathway" id="UPA00074">
    <property type="reaction ID" value="UER00131"/>
</dbReference>
<dbReference type="Proteomes" id="UP000001485">
    <property type="component" value="Chromosome"/>
</dbReference>
<dbReference type="GO" id="GO:0005829">
    <property type="term" value="C:cytosol"/>
    <property type="evidence" value="ECO:0007669"/>
    <property type="project" value="TreeGrafter"/>
</dbReference>
<dbReference type="GO" id="GO:0005524">
    <property type="term" value="F:ATP binding"/>
    <property type="evidence" value="ECO:0007669"/>
    <property type="project" value="UniProtKB-KW"/>
</dbReference>
<dbReference type="GO" id="GO:0004639">
    <property type="term" value="F:phosphoribosylaminoimidazolesuccinocarboxamide synthase activity"/>
    <property type="evidence" value="ECO:0007669"/>
    <property type="project" value="UniProtKB-UniRule"/>
</dbReference>
<dbReference type="GO" id="GO:0006189">
    <property type="term" value="P:'de novo' IMP biosynthetic process"/>
    <property type="evidence" value="ECO:0007669"/>
    <property type="project" value="UniProtKB-UniRule"/>
</dbReference>
<dbReference type="GO" id="GO:0009236">
    <property type="term" value="P:cobalamin biosynthetic process"/>
    <property type="evidence" value="ECO:0007669"/>
    <property type="project" value="InterPro"/>
</dbReference>
<dbReference type="CDD" id="cd01415">
    <property type="entry name" value="SAICAR_synt_PurC"/>
    <property type="match status" value="1"/>
</dbReference>
<dbReference type="FunFam" id="3.30.200.20:FF:000086">
    <property type="entry name" value="Phosphoribosylaminoimidazole-succinocarboxamide synthase"/>
    <property type="match status" value="1"/>
</dbReference>
<dbReference type="FunFam" id="3.30.470.20:FF:000006">
    <property type="entry name" value="Phosphoribosylaminoimidazole-succinocarboxamide synthase"/>
    <property type="match status" value="1"/>
</dbReference>
<dbReference type="Gene3D" id="3.30.470.20">
    <property type="entry name" value="ATP-grasp fold, B domain"/>
    <property type="match status" value="1"/>
</dbReference>
<dbReference type="Gene3D" id="3.30.200.20">
    <property type="entry name" value="Phosphorylase Kinase, domain 1"/>
    <property type="match status" value="1"/>
</dbReference>
<dbReference type="HAMAP" id="MF_00137">
    <property type="entry name" value="SAICAR_synth"/>
    <property type="match status" value="1"/>
</dbReference>
<dbReference type="InterPro" id="IPR028923">
    <property type="entry name" value="SAICAR_synt/ADE2_N"/>
</dbReference>
<dbReference type="InterPro" id="IPR033934">
    <property type="entry name" value="SAICAR_synt_PurC"/>
</dbReference>
<dbReference type="InterPro" id="IPR001636">
    <property type="entry name" value="SAICAR_synth"/>
</dbReference>
<dbReference type="InterPro" id="IPR050089">
    <property type="entry name" value="SAICAR_synthetase"/>
</dbReference>
<dbReference type="InterPro" id="IPR018236">
    <property type="entry name" value="SAICAR_synthetase_CS"/>
</dbReference>
<dbReference type="NCBIfam" id="TIGR00081">
    <property type="entry name" value="purC"/>
    <property type="match status" value="1"/>
</dbReference>
<dbReference type="PANTHER" id="PTHR43599">
    <property type="entry name" value="MULTIFUNCTIONAL PROTEIN ADE2"/>
    <property type="match status" value="1"/>
</dbReference>
<dbReference type="PANTHER" id="PTHR43599:SF3">
    <property type="entry name" value="SI:DKEY-6E2.2"/>
    <property type="match status" value="1"/>
</dbReference>
<dbReference type="Pfam" id="PF01259">
    <property type="entry name" value="SAICAR_synt"/>
    <property type="match status" value="1"/>
</dbReference>
<dbReference type="SUPFAM" id="SSF56104">
    <property type="entry name" value="SAICAR synthase-like"/>
    <property type="match status" value="1"/>
</dbReference>
<dbReference type="PROSITE" id="PS01057">
    <property type="entry name" value="SAICAR_SYNTHETASE_1"/>
    <property type="match status" value="1"/>
</dbReference>
<dbReference type="PROSITE" id="PS01058">
    <property type="entry name" value="SAICAR_SYNTHETASE_2"/>
    <property type="match status" value="1"/>
</dbReference>
<comment type="catalytic activity">
    <reaction evidence="1">
        <text>5-amino-1-(5-phospho-D-ribosyl)imidazole-4-carboxylate + L-aspartate + ATP = (2S)-2-[5-amino-1-(5-phospho-beta-D-ribosyl)imidazole-4-carboxamido]succinate + ADP + phosphate + 2 H(+)</text>
        <dbReference type="Rhea" id="RHEA:22628"/>
        <dbReference type="ChEBI" id="CHEBI:15378"/>
        <dbReference type="ChEBI" id="CHEBI:29991"/>
        <dbReference type="ChEBI" id="CHEBI:30616"/>
        <dbReference type="ChEBI" id="CHEBI:43474"/>
        <dbReference type="ChEBI" id="CHEBI:58443"/>
        <dbReference type="ChEBI" id="CHEBI:77657"/>
        <dbReference type="ChEBI" id="CHEBI:456216"/>
        <dbReference type="EC" id="6.3.2.6"/>
    </reaction>
</comment>
<comment type="pathway">
    <text evidence="1">Purine metabolism; IMP biosynthesis via de novo pathway; 5-amino-1-(5-phospho-D-ribosyl)imidazole-4-carboxamide from 5-amino-1-(5-phospho-D-ribosyl)imidazole-4-carboxylate: step 1/2.</text>
</comment>
<comment type="similarity">
    <text evidence="1">Belongs to the SAICAR synthetase family.</text>
</comment>
<evidence type="ECO:0000255" key="1">
    <source>
        <dbReference type="HAMAP-Rule" id="MF_00137"/>
    </source>
</evidence>
<sequence length="237" mass="26884">MQKLAELYRGKAKTVYTTEDPDLLILSFRNDTSALDGQRIEQFDRKGMVNNKFNHFIMSKLEAAGIPTQMERLLSDTDALVKKLEMVPVECVIRNRAAGSLVKRLGIEEGMPLNPPLFDLFLKNDAMHDPMVNESYCRTFGWVSDEHLAQMKALSYRANEVLSQLFDDAGLILVDFKLEFGLYKGQVVLGDEFSPDGSRLWDKTTLAKMDKDRFRQNLGGLIEAYEEVALRLGVPLD</sequence>